<protein>
    <recommendedName>
        <fullName evidence="4">ATP synthase F(0) complex subunit f, mitochondrial</fullName>
    </recommendedName>
    <alternativeName>
        <fullName evidence="4">ATP synthase membrane subunit f</fullName>
    </alternativeName>
</protein>
<reference key="1">
    <citation type="journal article" date="2000" name="Biochem. Biophys. Res. Commun.">
        <title>Growth suppression of Escherichia coli by induction of expression of mammalian genes with transmembrane or ATPase domains.</title>
        <authorList>
            <person name="Inoue S."/>
            <person name="Sano H."/>
            <person name="Ohta M."/>
        </authorList>
    </citation>
    <scope>NUCLEOTIDE SEQUENCE [MRNA]</scope>
    <source>
        <tissue>Brain</tissue>
    </source>
</reference>
<reference key="2">
    <citation type="journal article" date="2005" name="Science">
        <title>The transcriptional landscape of the mammalian genome.</title>
        <authorList>
            <person name="Carninci P."/>
            <person name="Kasukawa T."/>
            <person name="Katayama S."/>
            <person name="Gough J."/>
            <person name="Frith M.C."/>
            <person name="Maeda N."/>
            <person name="Oyama R."/>
            <person name="Ravasi T."/>
            <person name="Lenhard B."/>
            <person name="Wells C."/>
            <person name="Kodzius R."/>
            <person name="Shimokawa K."/>
            <person name="Bajic V.B."/>
            <person name="Brenner S.E."/>
            <person name="Batalov S."/>
            <person name="Forrest A.R."/>
            <person name="Zavolan M."/>
            <person name="Davis M.J."/>
            <person name="Wilming L.G."/>
            <person name="Aidinis V."/>
            <person name="Allen J.E."/>
            <person name="Ambesi-Impiombato A."/>
            <person name="Apweiler R."/>
            <person name="Aturaliya R.N."/>
            <person name="Bailey T.L."/>
            <person name="Bansal M."/>
            <person name="Baxter L."/>
            <person name="Beisel K.W."/>
            <person name="Bersano T."/>
            <person name="Bono H."/>
            <person name="Chalk A.M."/>
            <person name="Chiu K.P."/>
            <person name="Choudhary V."/>
            <person name="Christoffels A."/>
            <person name="Clutterbuck D.R."/>
            <person name="Crowe M.L."/>
            <person name="Dalla E."/>
            <person name="Dalrymple B.P."/>
            <person name="de Bono B."/>
            <person name="Della Gatta G."/>
            <person name="di Bernardo D."/>
            <person name="Down T."/>
            <person name="Engstrom P."/>
            <person name="Fagiolini M."/>
            <person name="Faulkner G."/>
            <person name="Fletcher C.F."/>
            <person name="Fukushima T."/>
            <person name="Furuno M."/>
            <person name="Futaki S."/>
            <person name="Gariboldi M."/>
            <person name="Georgii-Hemming P."/>
            <person name="Gingeras T.R."/>
            <person name="Gojobori T."/>
            <person name="Green R.E."/>
            <person name="Gustincich S."/>
            <person name="Harbers M."/>
            <person name="Hayashi Y."/>
            <person name="Hensch T.K."/>
            <person name="Hirokawa N."/>
            <person name="Hill D."/>
            <person name="Huminiecki L."/>
            <person name="Iacono M."/>
            <person name="Ikeo K."/>
            <person name="Iwama A."/>
            <person name="Ishikawa T."/>
            <person name="Jakt M."/>
            <person name="Kanapin A."/>
            <person name="Katoh M."/>
            <person name="Kawasawa Y."/>
            <person name="Kelso J."/>
            <person name="Kitamura H."/>
            <person name="Kitano H."/>
            <person name="Kollias G."/>
            <person name="Krishnan S.P."/>
            <person name="Kruger A."/>
            <person name="Kummerfeld S.K."/>
            <person name="Kurochkin I.V."/>
            <person name="Lareau L.F."/>
            <person name="Lazarevic D."/>
            <person name="Lipovich L."/>
            <person name="Liu J."/>
            <person name="Liuni S."/>
            <person name="McWilliam S."/>
            <person name="Madan Babu M."/>
            <person name="Madera M."/>
            <person name="Marchionni L."/>
            <person name="Matsuda H."/>
            <person name="Matsuzawa S."/>
            <person name="Miki H."/>
            <person name="Mignone F."/>
            <person name="Miyake S."/>
            <person name="Morris K."/>
            <person name="Mottagui-Tabar S."/>
            <person name="Mulder N."/>
            <person name="Nakano N."/>
            <person name="Nakauchi H."/>
            <person name="Ng P."/>
            <person name="Nilsson R."/>
            <person name="Nishiguchi S."/>
            <person name="Nishikawa S."/>
            <person name="Nori F."/>
            <person name="Ohara O."/>
            <person name="Okazaki Y."/>
            <person name="Orlando V."/>
            <person name="Pang K.C."/>
            <person name="Pavan W.J."/>
            <person name="Pavesi G."/>
            <person name="Pesole G."/>
            <person name="Petrovsky N."/>
            <person name="Piazza S."/>
            <person name="Reed J."/>
            <person name="Reid J.F."/>
            <person name="Ring B.Z."/>
            <person name="Ringwald M."/>
            <person name="Rost B."/>
            <person name="Ruan Y."/>
            <person name="Salzberg S.L."/>
            <person name="Sandelin A."/>
            <person name="Schneider C."/>
            <person name="Schoenbach C."/>
            <person name="Sekiguchi K."/>
            <person name="Semple C.A."/>
            <person name="Seno S."/>
            <person name="Sessa L."/>
            <person name="Sheng Y."/>
            <person name="Shibata Y."/>
            <person name="Shimada H."/>
            <person name="Shimada K."/>
            <person name="Silva D."/>
            <person name="Sinclair B."/>
            <person name="Sperling S."/>
            <person name="Stupka E."/>
            <person name="Sugiura K."/>
            <person name="Sultana R."/>
            <person name="Takenaka Y."/>
            <person name="Taki K."/>
            <person name="Tammoja K."/>
            <person name="Tan S.L."/>
            <person name="Tang S."/>
            <person name="Taylor M.S."/>
            <person name="Tegner J."/>
            <person name="Teichmann S.A."/>
            <person name="Ueda H.R."/>
            <person name="van Nimwegen E."/>
            <person name="Verardo R."/>
            <person name="Wei C.L."/>
            <person name="Yagi K."/>
            <person name="Yamanishi H."/>
            <person name="Zabarovsky E."/>
            <person name="Zhu S."/>
            <person name="Zimmer A."/>
            <person name="Hide W."/>
            <person name="Bult C."/>
            <person name="Grimmond S.M."/>
            <person name="Teasdale R.D."/>
            <person name="Liu E.T."/>
            <person name="Brusic V."/>
            <person name="Quackenbush J."/>
            <person name="Wahlestedt C."/>
            <person name="Mattick J.S."/>
            <person name="Hume D.A."/>
            <person name="Kai C."/>
            <person name="Sasaki D."/>
            <person name="Tomaru Y."/>
            <person name="Fukuda S."/>
            <person name="Kanamori-Katayama M."/>
            <person name="Suzuki M."/>
            <person name="Aoki J."/>
            <person name="Arakawa T."/>
            <person name="Iida J."/>
            <person name="Imamura K."/>
            <person name="Itoh M."/>
            <person name="Kato T."/>
            <person name="Kawaji H."/>
            <person name="Kawagashira N."/>
            <person name="Kawashima T."/>
            <person name="Kojima M."/>
            <person name="Kondo S."/>
            <person name="Konno H."/>
            <person name="Nakano K."/>
            <person name="Ninomiya N."/>
            <person name="Nishio T."/>
            <person name="Okada M."/>
            <person name="Plessy C."/>
            <person name="Shibata K."/>
            <person name="Shiraki T."/>
            <person name="Suzuki S."/>
            <person name="Tagami M."/>
            <person name="Waki K."/>
            <person name="Watahiki A."/>
            <person name="Okamura-Oho Y."/>
            <person name="Suzuki H."/>
            <person name="Kawai J."/>
            <person name="Hayashizaki Y."/>
        </authorList>
    </citation>
    <scope>NUCLEOTIDE SEQUENCE [LARGE SCALE MRNA]</scope>
    <source>
        <strain>C57BL/6J</strain>
        <strain>DBA/2J</strain>
        <tissue>Bone marrow</tissue>
        <tissue>Embryo</tissue>
        <tissue>Kidney</tissue>
    </source>
</reference>
<reference key="3">
    <citation type="journal article" date="2004" name="Genome Res.">
        <title>The status, quality, and expansion of the NIH full-length cDNA project: the Mammalian Gene Collection (MGC).</title>
        <authorList>
            <consortium name="The MGC Project Team"/>
        </authorList>
    </citation>
    <scope>NUCLEOTIDE SEQUENCE [LARGE SCALE MRNA]</scope>
    <source>
        <strain>Czech II</strain>
        <tissue>Mammary gland</tissue>
    </source>
</reference>
<reference key="4">
    <citation type="submission" date="2007-04" db="UniProtKB">
        <authorList>
            <person name="Lubec G."/>
            <person name="Kang S.U."/>
        </authorList>
    </citation>
    <scope>PROTEIN SEQUENCE OF 17-39</scope>
    <scope>IDENTIFICATION BY MASS SPECTROMETRY</scope>
    <source>
        <strain>C57BL/6J</strain>
        <tissue>Brain</tissue>
    </source>
</reference>
<reference key="5">
    <citation type="journal article" date="2010" name="Cell">
        <title>A tissue-specific atlas of mouse protein phosphorylation and expression.</title>
        <authorList>
            <person name="Huttlin E.L."/>
            <person name="Jedrychowski M.P."/>
            <person name="Elias J.E."/>
            <person name="Goswami T."/>
            <person name="Rad R."/>
            <person name="Beausoleil S.A."/>
            <person name="Villen J."/>
            <person name="Haas W."/>
            <person name="Sowa M.E."/>
            <person name="Gygi S.P."/>
        </authorList>
    </citation>
    <scope>IDENTIFICATION BY MASS SPECTROMETRY [LARGE SCALE ANALYSIS]</scope>
    <source>
        <tissue>Brain</tissue>
        <tissue>Heart</tissue>
        <tissue>Kidney</tissue>
        <tissue>Liver</tissue>
        <tissue>Lung</tissue>
        <tissue>Pancreas</tissue>
        <tissue>Testis</tissue>
    </source>
</reference>
<reference key="6">
    <citation type="journal article" date="2013" name="Proc. Natl. Acad. Sci. U.S.A.">
        <title>Label-free quantitative proteomics of the lysine acetylome in mitochondria identifies substrates of SIRT3 in metabolic pathways.</title>
        <authorList>
            <person name="Rardin M.J."/>
            <person name="Newman J.C."/>
            <person name="Held J.M."/>
            <person name="Cusack M.P."/>
            <person name="Sorensen D.J."/>
            <person name="Li B."/>
            <person name="Schilling B."/>
            <person name="Mooney S.D."/>
            <person name="Kahn C.R."/>
            <person name="Verdin E."/>
            <person name="Gibson B.W."/>
        </authorList>
    </citation>
    <scope>ACETYLATION [LARGE SCALE ANALYSIS] AT LYS-16</scope>
    <scope>IDENTIFICATION BY MASS SPECTROMETRY [LARGE SCALE ANALYSIS]</scope>
    <source>
        <tissue>Liver</tissue>
    </source>
</reference>
<sequence length="88" mass="10344">MASLVPLKEKKLMEVKLGELPSWIMMRDFTPSGIAGAFRRGYDRYYNKYINVRKGSISGISMVLAAYVVFSYCISYKELKHERRRKYH</sequence>
<gene>
    <name evidence="3" type="primary">Atp5mf</name>
    <name type="synonym">Atp5j2</name>
</gene>
<proteinExistence type="evidence at protein level"/>
<evidence type="ECO:0000250" key="1">
    <source>
        <dbReference type="UniProtKB" id="D3ZAF6"/>
    </source>
</evidence>
<evidence type="ECO:0000250" key="2">
    <source>
        <dbReference type="UniProtKB" id="P19483"/>
    </source>
</evidence>
<evidence type="ECO:0000250" key="3">
    <source>
        <dbReference type="UniProtKB" id="P56134"/>
    </source>
</evidence>
<evidence type="ECO:0000305" key="4"/>
<evidence type="ECO:0007744" key="5">
    <source>
    </source>
</evidence>
<dbReference type="EMBL" id="AB030192">
    <property type="protein sequence ID" value="BAA92756.1"/>
    <property type="molecule type" value="mRNA"/>
</dbReference>
<dbReference type="EMBL" id="AK002519">
    <property type="protein sequence ID" value="BAB22157.1"/>
    <property type="molecule type" value="mRNA"/>
</dbReference>
<dbReference type="EMBL" id="AK003235">
    <property type="protein sequence ID" value="BAB22660.1"/>
    <property type="molecule type" value="mRNA"/>
</dbReference>
<dbReference type="EMBL" id="AK003817">
    <property type="protein sequence ID" value="BAB23014.1"/>
    <property type="molecule type" value="mRNA"/>
</dbReference>
<dbReference type="EMBL" id="AK013130">
    <property type="protein sequence ID" value="BAB28667.1"/>
    <property type="molecule type" value="mRNA"/>
</dbReference>
<dbReference type="EMBL" id="AK151737">
    <property type="protein sequence ID" value="BAE30651.1"/>
    <property type="molecule type" value="mRNA"/>
</dbReference>
<dbReference type="EMBL" id="AK168095">
    <property type="protein sequence ID" value="BAE40067.1"/>
    <property type="molecule type" value="mRNA"/>
</dbReference>
<dbReference type="EMBL" id="BC029226">
    <property type="protein sequence ID" value="AAH29226.1"/>
    <property type="molecule type" value="mRNA"/>
</dbReference>
<dbReference type="CCDS" id="CCDS39385.1"/>
<dbReference type="RefSeq" id="NP_065607.1">
    <property type="nucleotide sequence ID" value="NM_020582.3"/>
</dbReference>
<dbReference type="SMR" id="P56135"/>
<dbReference type="BioGRID" id="208283">
    <property type="interactions" value="72"/>
</dbReference>
<dbReference type="FunCoup" id="P56135">
    <property type="interactions" value="1198"/>
</dbReference>
<dbReference type="IntAct" id="P56135">
    <property type="interactions" value="3"/>
</dbReference>
<dbReference type="MINT" id="P56135"/>
<dbReference type="STRING" id="10090.ENSMUSP00000125504"/>
<dbReference type="GlyGen" id="P56135">
    <property type="glycosylation" value="2 sites, 1 O-linked glycan (2 sites)"/>
</dbReference>
<dbReference type="iPTMnet" id="P56135"/>
<dbReference type="PhosphoSitePlus" id="P56135"/>
<dbReference type="SwissPalm" id="P56135"/>
<dbReference type="jPOST" id="P56135"/>
<dbReference type="PaxDb" id="10090-ENSMUSP00000125504"/>
<dbReference type="PeptideAtlas" id="P56135"/>
<dbReference type="ProteomicsDB" id="273454"/>
<dbReference type="Pumba" id="P56135"/>
<dbReference type="TopDownProteomics" id="P56135"/>
<dbReference type="Antibodypedia" id="56015">
    <property type="antibodies" value="120 antibodies from 19 providers"/>
</dbReference>
<dbReference type="DNASU" id="57423"/>
<dbReference type="Ensembl" id="ENSMUST00000161741.8">
    <property type="protein sequence ID" value="ENSMUSP00000125504.2"/>
    <property type="gene ID" value="ENSMUSG00000038690.16"/>
</dbReference>
<dbReference type="GeneID" id="57423"/>
<dbReference type="KEGG" id="mmu:57423"/>
<dbReference type="UCSC" id="uc009amk.1">
    <property type="organism name" value="mouse"/>
</dbReference>
<dbReference type="AGR" id="MGI:1927558"/>
<dbReference type="CTD" id="9551"/>
<dbReference type="MGI" id="MGI:1927558">
    <property type="gene designation" value="Atp5mf"/>
</dbReference>
<dbReference type="VEuPathDB" id="HostDB:ENSMUSG00000038690"/>
<dbReference type="eggNOG" id="KOG4092">
    <property type="taxonomic scope" value="Eukaryota"/>
</dbReference>
<dbReference type="GeneTree" id="ENSGT00510000046986"/>
<dbReference type="InParanoid" id="P56135"/>
<dbReference type="OMA" id="HKYVQPK"/>
<dbReference type="OrthoDB" id="8921675at2759"/>
<dbReference type="PhylomeDB" id="P56135"/>
<dbReference type="TreeFam" id="TF342865"/>
<dbReference type="Reactome" id="R-MMU-163210">
    <property type="pathway name" value="Formation of ATP by chemiosmotic coupling"/>
</dbReference>
<dbReference type="Reactome" id="R-MMU-8949613">
    <property type="pathway name" value="Cristae formation"/>
</dbReference>
<dbReference type="BioGRID-ORCS" id="57423">
    <property type="hits" value="24 hits in 78 CRISPR screens"/>
</dbReference>
<dbReference type="CD-CODE" id="CE726F99">
    <property type="entry name" value="Postsynaptic density"/>
</dbReference>
<dbReference type="ChiTaRS" id="Atp5j2">
    <property type="organism name" value="mouse"/>
</dbReference>
<dbReference type="PRO" id="PR:P56135"/>
<dbReference type="Proteomes" id="UP000000589">
    <property type="component" value="Chromosome 5"/>
</dbReference>
<dbReference type="RNAct" id="P56135">
    <property type="molecule type" value="protein"/>
</dbReference>
<dbReference type="Bgee" id="ENSMUSG00000038690">
    <property type="expression patterns" value="Expressed in atrioventricular valve and 252 other cell types or tissues"/>
</dbReference>
<dbReference type="ExpressionAtlas" id="P56135">
    <property type="expression patterns" value="baseline and differential"/>
</dbReference>
<dbReference type="GO" id="GO:0005743">
    <property type="term" value="C:mitochondrial inner membrane"/>
    <property type="evidence" value="ECO:0007005"/>
    <property type="project" value="MGI"/>
</dbReference>
<dbReference type="GO" id="GO:0005739">
    <property type="term" value="C:mitochondrion"/>
    <property type="evidence" value="ECO:0007005"/>
    <property type="project" value="MGI"/>
</dbReference>
<dbReference type="GO" id="GO:0031965">
    <property type="term" value="C:nuclear membrane"/>
    <property type="evidence" value="ECO:0007669"/>
    <property type="project" value="Ensembl"/>
</dbReference>
<dbReference type="GO" id="GO:0045259">
    <property type="term" value="C:proton-transporting ATP synthase complex"/>
    <property type="evidence" value="ECO:0000250"/>
    <property type="project" value="UniProtKB"/>
</dbReference>
<dbReference type="GO" id="GO:0046933">
    <property type="term" value="F:proton-transporting ATP synthase activity, rotational mechanism"/>
    <property type="evidence" value="ECO:0007669"/>
    <property type="project" value="Ensembl"/>
</dbReference>
<dbReference type="GO" id="GO:0042776">
    <property type="term" value="P:proton motive force-driven mitochondrial ATP synthesis"/>
    <property type="evidence" value="ECO:0007669"/>
    <property type="project" value="Ensembl"/>
</dbReference>
<dbReference type="InterPro" id="IPR019344">
    <property type="entry name" value="F1F0-ATPsyn_F_prd"/>
</dbReference>
<dbReference type="PANTHER" id="PTHR13080">
    <property type="entry name" value="ATP SYNTHASE F CHAIN, MITOCHONDRIAL-RELATED"/>
    <property type="match status" value="1"/>
</dbReference>
<dbReference type="PANTHER" id="PTHR13080:SF16">
    <property type="entry name" value="ATP SYNTHASE SUBUNIT F, MITOCHONDRIAL"/>
    <property type="match status" value="1"/>
</dbReference>
<dbReference type="Pfam" id="PF10206">
    <property type="entry name" value="WRW"/>
    <property type="match status" value="1"/>
</dbReference>
<feature type="initiator methionine" description="Removed" evidence="3">
    <location>
        <position position="1"/>
    </location>
</feature>
<feature type="chain" id="PRO_0000194825" description="ATP synthase F(0) complex subunit f, mitochondrial">
    <location>
        <begin position="2"/>
        <end position="88"/>
    </location>
</feature>
<feature type="transmembrane region" description="Helical" evidence="3">
    <location>
        <begin position="62"/>
        <end position="79"/>
    </location>
</feature>
<feature type="modified residue" description="N-acetylalanine" evidence="3">
    <location>
        <position position="2"/>
    </location>
</feature>
<feature type="modified residue" description="Phosphoserine" evidence="1">
    <location>
        <position position="3"/>
    </location>
</feature>
<feature type="modified residue" description="N6-acetyllysine" evidence="5">
    <location>
        <position position="16"/>
    </location>
</feature>
<accession>P56135</accession>
<accession>Q3THX9</accession>
<accession>Q9JMF4</accession>
<comment type="function">
    <text evidence="2 3">Subunit f, of the mitochondrial membrane ATP synthase complex (F(1)F(0) ATP synthase or Complex V) that produces ATP from ADP in the presence of a proton gradient across the membrane which is generated by electron transport complexes of the respiratory chain. ATP synthase complex consist of a soluble F(1) head domain - the catalytic core - and a membrane F(1) domain - the membrane proton channel. These two domains are linked by a central stalk rotating inside the F(1) region and a stationary peripheral stalk. During catalysis, ATP synthesis in the catalytic domain of F(1) is coupled via a rotary mechanism of the central stalk subunits to proton translocation (By similarity). In vivo, can only synthesize ATP although its ATP hydrolase activity can be activated artificially in vitro (By similarity). Part of the complex F(0) domain (By similarity).</text>
</comment>
<comment type="subunit">
    <text evidence="3">Component of the ATP synthase complex composed at least of ATP5F1A/subunit alpha, ATP5F1B/subunit beta, ATP5MC1/subunit c (homooctomer), MT-ATP6/subunit a, MT-ATP8/subunit 8, ATP5ME/subunit e, ATP5MF/subunit f, ATP5MG/subunit g, ATP5MK/subunit k, ATP5MJ/subunit j, ATP5F1C/subunit gamma, ATP5F1D/subunit delta, ATP5F1E/subunit epsilon, ATP5PF/subunit F6, ATP5PB/subunit b, ATP5PD/subunit d, ATP5PO/subunit OSCP. ATP synthase complex consists of a soluble F(1) head domain (subunits alpha(3) and beta(3)) - the catalytic core - and a membrane F(0) domain - the membrane proton channel (subunits c, a, 8, e, f, g, k and j). These two domains are linked by a central stalk (subunits gamma, delta, and epsilon) rotating inside the F1 region and a stationary peripheral stalk (subunits F6, b, d, and OSCP).</text>
</comment>
<comment type="subcellular location">
    <subcellularLocation>
        <location>Mitochondrion</location>
    </subcellularLocation>
    <subcellularLocation>
        <location evidence="4">Mitochondrion inner membrane</location>
        <topology evidence="4">Single-pass membrane protein</topology>
    </subcellularLocation>
</comment>
<comment type="similarity">
    <text evidence="4">Belongs to the ATPase F chain family.</text>
</comment>
<organism>
    <name type="scientific">Mus musculus</name>
    <name type="common">Mouse</name>
    <dbReference type="NCBI Taxonomy" id="10090"/>
    <lineage>
        <taxon>Eukaryota</taxon>
        <taxon>Metazoa</taxon>
        <taxon>Chordata</taxon>
        <taxon>Craniata</taxon>
        <taxon>Vertebrata</taxon>
        <taxon>Euteleostomi</taxon>
        <taxon>Mammalia</taxon>
        <taxon>Eutheria</taxon>
        <taxon>Euarchontoglires</taxon>
        <taxon>Glires</taxon>
        <taxon>Rodentia</taxon>
        <taxon>Myomorpha</taxon>
        <taxon>Muroidea</taxon>
        <taxon>Muridae</taxon>
        <taxon>Murinae</taxon>
        <taxon>Mus</taxon>
        <taxon>Mus</taxon>
    </lineage>
</organism>
<keyword id="KW-0007">Acetylation</keyword>
<keyword id="KW-0066">ATP synthesis</keyword>
<keyword id="KW-0138">CF(0)</keyword>
<keyword id="KW-0903">Direct protein sequencing</keyword>
<keyword id="KW-0375">Hydrogen ion transport</keyword>
<keyword id="KW-0406">Ion transport</keyword>
<keyword id="KW-0472">Membrane</keyword>
<keyword id="KW-0496">Mitochondrion</keyword>
<keyword id="KW-0999">Mitochondrion inner membrane</keyword>
<keyword id="KW-0597">Phosphoprotein</keyword>
<keyword id="KW-1185">Reference proteome</keyword>
<keyword id="KW-0812">Transmembrane</keyword>
<keyword id="KW-1133">Transmembrane helix</keyword>
<keyword id="KW-0813">Transport</keyword>
<name>ATPK_MOUSE</name>